<protein>
    <recommendedName>
        <fullName evidence="1">Ribosome maturation factor RimP</fullName>
    </recommendedName>
</protein>
<dbReference type="EMBL" id="CP000383">
    <property type="protein sequence ID" value="ABG60656.1"/>
    <property type="molecule type" value="Genomic_DNA"/>
</dbReference>
<dbReference type="RefSeq" id="WP_011586763.1">
    <property type="nucleotide sequence ID" value="NC_008255.1"/>
</dbReference>
<dbReference type="SMR" id="Q11PK7"/>
<dbReference type="STRING" id="269798.CHU_3420"/>
<dbReference type="KEGG" id="chu:CHU_3420"/>
<dbReference type="eggNOG" id="COG0779">
    <property type="taxonomic scope" value="Bacteria"/>
</dbReference>
<dbReference type="HOGENOM" id="CLU_070525_3_1_10"/>
<dbReference type="OrthoDB" id="9789702at2"/>
<dbReference type="Proteomes" id="UP000001822">
    <property type="component" value="Chromosome"/>
</dbReference>
<dbReference type="GO" id="GO:0005829">
    <property type="term" value="C:cytosol"/>
    <property type="evidence" value="ECO:0007669"/>
    <property type="project" value="TreeGrafter"/>
</dbReference>
<dbReference type="GO" id="GO:0000028">
    <property type="term" value="P:ribosomal small subunit assembly"/>
    <property type="evidence" value="ECO:0007669"/>
    <property type="project" value="TreeGrafter"/>
</dbReference>
<dbReference type="GO" id="GO:0006412">
    <property type="term" value="P:translation"/>
    <property type="evidence" value="ECO:0007669"/>
    <property type="project" value="TreeGrafter"/>
</dbReference>
<dbReference type="Gene3D" id="3.30.300.70">
    <property type="entry name" value="RimP-like superfamily, N-terminal"/>
    <property type="match status" value="1"/>
</dbReference>
<dbReference type="HAMAP" id="MF_01077">
    <property type="entry name" value="RimP"/>
    <property type="match status" value="1"/>
</dbReference>
<dbReference type="InterPro" id="IPR003728">
    <property type="entry name" value="Ribosome_maturation_RimP"/>
</dbReference>
<dbReference type="InterPro" id="IPR028989">
    <property type="entry name" value="RimP_N"/>
</dbReference>
<dbReference type="InterPro" id="IPR035956">
    <property type="entry name" value="RimP_N_sf"/>
</dbReference>
<dbReference type="PANTHER" id="PTHR33867">
    <property type="entry name" value="RIBOSOME MATURATION FACTOR RIMP"/>
    <property type="match status" value="1"/>
</dbReference>
<dbReference type="PANTHER" id="PTHR33867:SF1">
    <property type="entry name" value="RIBOSOME MATURATION FACTOR RIMP"/>
    <property type="match status" value="1"/>
</dbReference>
<dbReference type="Pfam" id="PF02576">
    <property type="entry name" value="RimP_N"/>
    <property type="match status" value="1"/>
</dbReference>
<dbReference type="SUPFAM" id="SSF75420">
    <property type="entry name" value="YhbC-like, N-terminal domain"/>
    <property type="match status" value="1"/>
</dbReference>
<evidence type="ECO:0000255" key="1">
    <source>
        <dbReference type="HAMAP-Rule" id="MF_01077"/>
    </source>
</evidence>
<keyword id="KW-0963">Cytoplasm</keyword>
<keyword id="KW-1185">Reference proteome</keyword>
<keyword id="KW-0690">Ribosome biogenesis</keyword>
<reference key="1">
    <citation type="journal article" date="2007" name="Appl. Environ. Microbiol.">
        <title>Genome sequence of the cellulolytic gliding bacterium Cytophaga hutchinsonii.</title>
        <authorList>
            <person name="Xie G."/>
            <person name="Bruce D.C."/>
            <person name="Challacombe J.F."/>
            <person name="Chertkov O."/>
            <person name="Detter J.C."/>
            <person name="Gilna P."/>
            <person name="Han C.S."/>
            <person name="Lucas S."/>
            <person name="Misra M."/>
            <person name="Myers G.L."/>
            <person name="Richardson P."/>
            <person name="Tapia R."/>
            <person name="Thayer N."/>
            <person name="Thompson L.S."/>
            <person name="Brettin T.S."/>
            <person name="Henrissat B."/>
            <person name="Wilson D.B."/>
            <person name="McBride M.J."/>
        </authorList>
    </citation>
    <scope>NUCLEOTIDE SEQUENCE [LARGE SCALE GENOMIC DNA]</scope>
    <source>
        <strain>ATCC 33406 / DSM 1761 / JCM 20678 / CIP 103989 / IAM 12607 / NBRC 15051 / NCIMB 9469 / D465</strain>
    </source>
</reference>
<comment type="function">
    <text evidence="1">Required for maturation of 30S ribosomal subunits.</text>
</comment>
<comment type="subcellular location">
    <subcellularLocation>
        <location evidence="1">Cytoplasm</location>
    </subcellularLocation>
</comment>
<comment type="similarity">
    <text evidence="1">Belongs to the RimP family.</text>
</comment>
<feature type="chain" id="PRO_0000384636" description="Ribosome maturation factor RimP">
    <location>
        <begin position="1"/>
        <end position="167"/>
    </location>
</feature>
<proteinExistence type="inferred from homology"/>
<organism>
    <name type="scientific">Cytophaga hutchinsonii (strain ATCC 33406 / DSM 1761 / CIP 103989 / NBRC 15051 / NCIMB 9469 / D465)</name>
    <dbReference type="NCBI Taxonomy" id="269798"/>
    <lineage>
        <taxon>Bacteria</taxon>
        <taxon>Pseudomonadati</taxon>
        <taxon>Bacteroidota</taxon>
        <taxon>Cytophagia</taxon>
        <taxon>Cytophagales</taxon>
        <taxon>Cytophagaceae</taxon>
        <taxon>Cytophaga</taxon>
    </lineage>
</organism>
<sequence>MSKQELEIKTYVSDLLQERAELFLVDIAFSGTHSRRKILVILDKDSGILIDECGEFSRALGNLIEENNLFGDNAYVLEVSSPGMDRPLLVSRQYKRRIGNTLSFLLNDGTQFDAVLESVSEEGVVVMPAPQKVKKSNKKEAVVDVAIEPRKLRFEEIKKCNLIVSFK</sequence>
<name>RIMP_CYTH3</name>
<gene>
    <name evidence="1" type="primary">rimP</name>
    <name type="ordered locus">CHU_3420</name>
</gene>
<accession>Q11PK7</accession>